<sequence length="238" mass="24222">MSTDVAAADIPVPQVEVAADAAVDTPAAKPAKAPKAAKAKKSTPGPKKPRVTPAHPSYAEMVSEAIAALKERSGSSTIAIGKFIEDKHKAHLPANFRKILLTQIKKLVAAGKLTKVKGSYKLAKAPAAVKPKTATKKKPAAKPKAKAPAKKTAAKSPAKKAAAKPKAKAPAKAKAVAKPKAAAKPKAAAKPKAKAAAKKAPAAATPKKPAARKPPTKRATPVKKAAPAKKPAAKKAKK</sequence>
<protein>
    <recommendedName>
        <fullName>Histone H1</fullName>
    </recommendedName>
</protein>
<keyword id="KW-0158">Chromosome</keyword>
<keyword id="KW-0238">DNA-binding</keyword>
<keyword id="KW-0539">Nucleus</keyword>
<keyword id="KW-1185">Reference proteome</keyword>
<accession>P27806</accession>
<evidence type="ECO:0000255" key="1">
    <source>
        <dbReference type="PROSITE-ProRule" id="PRU00837"/>
    </source>
</evidence>
<evidence type="ECO:0000256" key="2">
    <source>
        <dbReference type="SAM" id="MobiDB-lite"/>
    </source>
</evidence>
<comment type="function">
    <text>Histones H1 are necessary for the condensation of nucleosome chains into higher-order structures.</text>
</comment>
<comment type="subcellular location">
    <subcellularLocation>
        <location>Nucleus</location>
    </subcellularLocation>
    <subcellularLocation>
        <location>Chromosome</location>
    </subcellularLocation>
</comment>
<comment type="similarity">
    <text evidence="1">Belongs to the histone H1/H5 family.</text>
</comment>
<organism>
    <name type="scientific">Triticum aestivum</name>
    <name type="common">Wheat</name>
    <dbReference type="NCBI Taxonomy" id="4565"/>
    <lineage>
        <taxon>Eukaryota</taxon>
        <taxon>Viridiplantae</taxon>
        <taxon>Streptophyta</taxon>
        <taxon>Embryophyta</taxon>
        <taxon>Tracheophyta</taxon>
        <taxon>Spermatophyta</taxon>
        <taxon>Magnoliopsida</taxon>
        <taxon>Liliopsida</taxon>
        <taxon>Poales</taxon>
        <taxon>Poaceae</taxon>
        <taxon>BOP clade</taxon>
        <taxon>Pooideae</taxon>
        <taxon>Triticodae</taxon>
        <taxon>Triticeae</taxon>
        <taxon>Triticinae</taxon>
        <taxon>Triticum</taxon>
    </lineage>
</organism>
<dbReference type="EMBL" id="X59872">
    <property type="protein sequence ID" value="CAA42529.2"/>
    <property type="molecule type" value="mRNA"/>
</dbReference>
<dbReference type="PIR" id="S22322">
    <property type="entry name" value="S22322"/>
</dbReference>
<dbReference type="SMR" id="P27806"/>
<dbReference type="STRING" id="4565.P27806"/>
<dbReference type="PaxDb" id="4565-Traes_5BL_A8B4F5EC6.1"/>
<dbReference type="eggNOG" id="ENOG502RXWQ">
    <property type="taxonomic scope" value="Eukaryota"/>
</dbReference>
<dbReference type="Proteomes" id="UP000019116">
    <property type="component" value="Unplaced"/>
</dbReference>
<dbReference type="ExpressionAtlas" id="P27806">
    <property type="expression patterns" value="baseline and differential"/>
</dbReference>
<dbReference type="GO" id="GO:0000786">
    <property type="term" value="C:nucleosome"/>
    <property type="evidence" value="ECO:0007669"/>
    <property type="project" value="InterPro"/>
</dbReference>
<dbReference type="GO" id="GO:0005634">
    <property type="term" value="C:nucleus"/>
    <property type="evidence" value="ECO:0000318"/>
    <property type="project" value="GO_Central"/>
</dbReference>
<dbReference type="GO" id="GO:0003690">
    <property type="term" value="F:double-stranded DNA binding"/>
    <property type="evidence" value="ECO:0000318"/>
    <property type="project" value="GO_Central"/>
</dbReference>
<dbReference type="GO" id="GO:0003691">
    <property type="term" value="F:double-stranded telomeric DNA binding"/>
    <property type="evidence" value="ECO:0007669"/>
    <property type="project" value="InterPro"/>
</dbReference>
<dbReference type="GO" id="GO:0031492">
    <property type="term" value="F:nucleosomal DNA binding"/>
    <property type="evidence" value="ECO:0000318"/>
    <property type="project" value="GO_Central"/>
</dbReference>
<dbReference type="GO" id="GO:0030527">
    <property type="term" value="F:structural constituent of chromatin"/>
    <property type="evidence" value="ECO:0007669"/>
    <property type="project" value="InterPro"/>
</dbReference>
<dbReference type="GO" id="GO:0030261">
    <property type="term" value="P:chromosome condensation"/>
    <property type="evidence" value="ECO:0000318"/>
    <property type="project" value="GO_Central"/>
</dbReference>
<dbReference type="GO" id="GO:0045910">
    <property type="term" value="P:negative regulation of DNA recombination"/>
    <property type="evidence" value="ECO:0000318"/>
    <property type="project" value="GO_Central"/>
</dbReference>
<dbReference type="GO" id="GO:0006334">
    <property type="term" value="P:nucleosome assembly"/>
    <property type="evidence" value="ECO:0007669"/>
    <property type="project" value="InterPro"/>
</dbReference>
<dbReference type="CDD" id="cd00073">
    <property type="entry name" value="H15"/>
    <property type="match status" value="1"/>
</dbReference>
<dbReference type="Gene3D" id="1.10.10.10">
    <property type="entry name" value="Winged helix-like DNA-binding domain superfamily/Winged helix DNA-binding domain"/>
    <property type="match status" value="1"/>
</dbReference>
<dbReference type="InterPro" id="IPR005819">
    <property type="entry name" value="H1/H5"/>
</dbReference>
<dbReference type="InterPro" id="IPR005818">
    <property type="entry name" value="Histone_H1/H5_H15"/>
</dbReference>
<dbReference type="InterPro" id="IPR044597">
    <property type="entry name" value="SMH1-6"/>
</dbReference>
<dbReference type="InterPro" id="IPR036388">
    <property type="entry name" value="WH-like_DNA-bd_sf"/>
</dbReference>
<dbReference type="InterPro" id="IPR036390">
    <property type="entry name" value="WH_DNA-bd_sf"/>
</dbReference>
<dbReference type="PANTHER" id="PTHR46267">
    <property type="entry name" value="SINGLE MYB HISTONE 4"/>
    <property type="match status" value="1"/>
</dbReference>
<dbReference type="PANTHER" id="PTHR46267:SF15">
    <property type="entry name" value="WINGED HELIX-TURN-HELIX TRANSCRIPTION REPRESSOR DNA-BINDING PROTEIN-RELATED"/>
    <property type="match status" value="1"/>
</dbReference>
<dbReference type="Pfam" id="PF00538">
    <property type="entry name" value="Linker_histone"/>
    <property type="match status" value="1"/>
</dbReference>
<dbReference type="PRINTS" id="PR00624">
    <property type="entry name" value="HISTONEH5"/>
</dbReference>
<dbReference type="SMART" id="SM00526">
    <property type="entry name" value="H15"/>
    <property type="match status" value="1"/>
</dbReference>
<dbReference type="SUPFAM" id="SSF46785">
    <property type="entry name" value="Winged helix' DNA-binding domain"/>
    <property type="match status" value="1"/>
</dbReference>
<dbReference type="PROSITE" id="PS51504">
    <property type="entry name" value="H15"/>
    <property type="match status" value="1"/>
</dbReference>
<reference key="1">
    <citation type="journal article" date="1991" name="Nucleic Acids Res.">
        <title>Molecular cloning and nucleotide sequences of cDNAs for histone H1 and H2B variants from wheat.</title>
        <authorList>
            <person name="Yang P."/>
            <person name="Katsura M."/>
            <person name="Nakayama T."/>
            <person name="Mikami K."/>
            <person name="Iwabuchi M."/>
        </authorList>
    </citation>
    <scope>NUCLEOTIDE SEQUENCE [MRNA]</scope>
    <source>
        <strain>cv. Horoshirikomugi</strain>
        <tissue>Seedling</tissue>
    </source>
</reference>
<reference key="2">
    <citation type="submission" date="2000-11" db="EMBL/GenBank/DDBJ databases">
        <authorList>
            <person name="Morisawa G."/>
            <person name="Meshi T."/>
            <person name="Iwabuchi M."/>
        </authorList>
    </citation>
    <scope>SEQUENCE REVISION</scope>
</reference>
<name>H1_WHEAT</name>
<feature type="chain" id="PRO_0000195958" description="Histone H1">
    <location>
        <begin position="1"/>
        <end position="238"/>
    </location>
</feature>
<feature type="domain" description="H15" evidence="1">
    <location>
        <begin position="54"/>
        <end position="124"/>
    </location>
</feature>
<feature type="region of interest" description="Disordered" evidence="2">
    <location>
        <begin position="21"/>
        <end position="57"/>
    </location>
</feature>
<feature type="region of interest" description="Disordered" evidence="2">
    <location>
        <begin position="123"/>
        <end position="238"/>
    </location>
</feature>
<feature type="compositionally biased region" description="Low complexity" evidence="2">
    <location>
        <begin position="21"/>
        <end position="34"/>
    </location>
</feature>
<feature type="compositionally biased region" description="Low complexity" evidence="2">
    <location>
        <begin position="123"/>
        <end position="132"/>
    </location>
</feature>
<feature type="compositionally biased region" description="Basic residues" evidence="2">
    <location>
        <begin position="133"/>
        <end position="197"/>
    </location>
</feature>
<feature type="compositionally biased region" description="Low complexity" evidence="2">
    <location>
        <begin position="198"/>
        <end position="208"/>
    </location>
</feature>
<feature type="compositionally biased region" description="Low complexity" evidence="2">
    <location>
        <begin position="217"/>
        <end position="230"/>
    </location>
</feature>
<proteinExistence type="evidence at transcript level"/>